<organism>
    <name type="scientific">Acinetobacter baumannii (strain AB0057)</name>
    <dbReference type="NCBI Taxonomy" id="480119"/>
    <lineage>
        <taxon>Bacteria</taxon>
        <taxon>Pseudomonadati</taxon>
        <taxon>Pseudomonadota</taxon>
        <taxon>Gammaproteobacteria</taxon>
        <taxon>Moraxellales</taxon>
        <taxon>Moraxellaceae</taxon>
        <taxon>Acinetobacter</taxon>
        <taxon>Acinetobacter calcoaceticus/baumannii complex</taxon>
    </lineage>
</organism>
<feature type="chain" id="PRO_1000127913" description="Small ribosomal subunit protein uS19">
    <location>
        <begin position="1"/>
        <end position="91"/>
    </location>
</feature>
<feature type="helix" evidence="3">
    <location>
        <begin position="5"/>
        <end position="7"/>
    </location>
</feature>
<feature type="helix" evidence="3">
    <location>
        <begin position="13"/>
        <end position="24"/>
    </location>
</feature>
<feature type="strand" evidence="3">
    <location>
        <begin position="31"/>
        <end position="33"/>
    </location>
</feature>
<feature type="helix" evidence="3">
    <location>
        <begin position="42"/>
        <end position="44"/>
    </location>
</feature>
<feature type="strand" evidence="3">
    <location>
        <begin position="48"/>
        <end position="52"/>
    </location>
</feature>
<feature type="strand" evidence="3">
    <location>
        <begin position="54"/>
        <end position="61"/>
    </location>
</feature>
<feature type="helix" evidence="3">
    <location>
        <begin position="64"/>
        <end position="66"/>
    </location>
</feature>
<feature type="helix" evidence="3">
    <location>
        <begin position="71"/>
        <end position="74"/>
    </location>
</feature>
<keyword id="KW-0002">3D-structure</keyword>
<keyword id="KW-0687">Ribonucleoprotein</keyword>
<keyword id="KW-0689">Ribosomal protein</keyword>
<keyword id="KW-0694">RNA-binding</keyword>
<keyword id="KW-0699">rRNA-binding</keyword>
<evidence type="ECO:0000255" key="1">
    <source>
        <dbReference type="HAMAP-Rule" id="MF_00531"/>
    </source>
</evidence>
<evidence type="ECO:0000305" key="2"/>
<evidence type="ECO:0007829" key="3">
    <source>
        <dbReference type="PDB" id="7M4U"/>
    </source>
</evidence>
<comment type="function">
    <text evidence="1">Protein S19 forms a complex with S13 that binds strongly to the 16S ribosomal RNA.</text>
</comment>
<comment type="similarity">
    <text evidence="1">Belongs to the universal ribosomal protein uS19 family.</text>
</comment>
<dbReference type="EMBL" id="CP001182">
    <property type="protein sequence ID" value="ACJ42893.1"/>
    <property type="molecule type" value="Genomic_DNA"/>
</dbReference>
<dbReference type="RefSeq" id="WP_001138119.1">
    <property type="nucleotide sequence ID" value="NC_011586.2"/>
</dbReference>
<dbReference type="PDB" id="6V39">
    <property type="method" value="EM"/>
    <property type="resolution" value="3.04 A"/>
    <property type="chains" value="s=1-91"/>
</dbReference>
<dbReference type="PDB" id="6V3A">
    <property type="method" value="EM"/>
    <property type="resolution" value="2.82 A"/>
    <property type="chains" value="s=1-91"/>
</dbReference>
<dbReference type="PDB" id="6V3B">
    <property type="method" value="EM"/>
    <property type="resolution" value="2.91 A"/>
    <property type="chains" value="s=1-91"/>
</dbReference>
<dbReference type="PDB" id="6V3E">
    <property type="method" value="EM"/>
    <property type="resolution" value="4.40 A"/>
    <property type="chains" value="s=1-91"/>
</dbReference>
<dbReference type="PDB" id="7M4U">
    <property type="method" value="EM"/>
    <property type="resolution" value="2.71 A"/>
    <property type="chains" value="s=1-91"/>
</dbReference>
<dbReference type="PDB" id="7M4W">
    <property type="method" value="EM"/>
    <property type="resolution" value="2.55 A"/>
    <property type="chains" value="s=1-91"/>
</dbReference>
<dbReference type="PDB" id="7M4X">
    <property type="method" value="EM"/>
    <property type="resolution" value="2.66 A"/>
    <property type="chains" value="s=1-91"/>
</dbReference>
<dbReference type="PDB" id="7M4Y">
    <property type="method" value="EM"/>
    <property type="resolution" value="2.50 A"/>
    <property type="chains" value="s=1-91"/>
</dbReference>
<dbReference type="PDB" id="7M4Z">
    <property type="method" value="EM"/>
    <property type="resolution" value="2.92 A"/>
    <property type="chains" value="s=1-91"/>
</dbReference>
<dbReference type="PDB" id="7RYF">
    <property type="method" value="EM"/>
    <property type="resolution" value="2.65 A"/>
    <property type="chains" value="s=1-91"/>
</dbReference>
<dbReference type="PDB" id="7RYG">
    <property type="method" value="EM"/>
    <property type="resolution" value="2.38 A"/>
    <property type="chains" value="s=1-91"/>
</dbReference>
<dbReference type="PDB" id="7RYH">
    <property type="method" value="EM"/>
    <property type="resolution" value="2.43 A"/>
    <property type="chains" value="s=1-91"/>
</dbReference>
<dbReference type="PDB" id="7UVV">
    <property type="method" value="EM"/>
    <property type="resolution" value="2.50 A"/>
    <property type="chains" value="s=1-91"/>
</dbReference>
<dbReference type="PDB" id="7UVW">
    <property type="method" value="EM"/>
    <property type="resolution" value="2.37 A"/>
    <property type="chains" value="s=1-91"/>
</dbReference>
<dbReference type="PDB" id="7UVX">
    <property type="method" value="EM"/>
    <property type="resolution" value="2.35 A"/>
    <property type="chains" value="s=1-91"/>
</dbReference>
<dbReference type="PDB" id="7UVY">
    <property type="method" value="EM"/>
    <property type="resolution" value="2.39 A"/>
    <property type="chains" value="s=1-91"/>
</dbReference>
<dbReference type="PDB" id="7UVZ">
    <property type="method" value="EM"/>
    <property type="resolution" value="2.21 A"/>
    <property type="chains" value="s=1-91"/>
</dbReference>
<dbReference type="PDB" id="7UW1">
    <property type="method" value="EM"/>
    <property type="resolution" value="2.21 A"/>
    <property type="chains" value="s=1-91"/>
</dbReference>
<dbReference type="PDBsum" id="6V39"/>
<dbReference type="PDBsum" id="6V3A"/>
<dbReference type="PDBsum" id="6V3B"/>
<dbReference type="PDBsum" id="6V3E"/>
<dbReference type="PDBsum" id="7M4U"/>
<dbReference type="PDBsum" id="7M4W"/>
<dbReference type="PDBsum" id="7M4X"/>
<dbReference type="PDBsum" id="7M4Y"/>
<dbReference type="PDBsum" id="7M4Z"/>
<dbReference type="PDBsum" id="7RYF"/>
<dbReference type="PDBsum" id="7RYG"/>
<dbReference type="PDBsum" id="7RYH"/>
<dbReference type="PDBsum" id="7UVV"/>
<dbReference type="PDBsum" id="7UVW"/>
<dbReference type="PDBsum" id="7UVX"/>
<dbReference type="PDBsum" id="7UVY"/>
<dbReference type="PDBsum" id="7UVZ"/>
<dbReference type="PDBsum" id="7UW1"/>
<dbReference type="EMDB" id="EMD-21030"/>
<dbReference type="EMDB" id="EMD-21031"/>
<dbReference type="EMDB" id="EMD-21032"/>
<dbReference type="EMDB" id="EMD-21034"/>
<dbReference type="EMDB" id="EMD-23666"/>
<dbReference type="EMDB" id="EMD-23668"/>
<dbReference type="EMDB" id="EMD-23669"/>
<dbReference type="EMDB" id="EMD-23670"/>
<dbReference type="EMDB" id="EMD-23671"/>
<dbReference type="EMDB" id="EMD-24738"/>
<dbReference type="EMDB" id="EMD-24739"/>
<dbReference type="EMDB" id="EMD-24740"/>
<dbReference type="EMDB" id="EMD-26817"/>
<dbReference type="EMDB" id="EMD-26818"/>
<dbReference type="EMDB" id="EMD-26819"/>
<dbReference type="EMDB" id="EMD-26820"/>
<dbReference type="EMDB" id="EMD-26821"/>
<dbReference type="EMDB" id="EMD-26822"/>
<dbReference type="SMR" id="B7IA35"/>
<dbReference type="IntAct" id="B7IA35">
    <property type="interactions" value="1"/>
</dbReference>
<dbReference type="GeneID" id="97425203"/>
<dbReference type="KEGG" id="abn:AB57_3526"/>
<dbReference type="HOGENOM" id="CLU_144911_0_1_6"/>
<dbReference type="Proteomes" id="UP000007094">
    <property type="component" value="Chromosome"/>
</dbReference>
<dbReference type="GO" id="GO:0005737">
    <property type="term" value="C:cytoplasm"/>
    <property type="evidence" value="ECO:0007669"/>
    <property type="project" value="UniProtKB-ARBA"/>
</dbReference>
<dbReference type="GO" id="GO:0015935">
    <property type="term" value="C:small ribosomal subunit"/>
    <property type="evidence" value="ECO:0007669"/>
    <property type="project" value="InterPro"/>
</dbReference>
<dbReference type="GO" id="GO:0019843">
    <property type="term" value="F:rRNA binding"/>
    <property type="evidence" value="ECO:0007669"/>
    <property type="project" value="UniProtKB-UniRule"/>
</dbReference>
<dbReference type="GO" id="GO:0003735">
    <property type="term" value="F:structural constituent of ribosome"/>
    <property type="evidence" value="ECO:0007669"/>
    <property type="project" value="InterPro"/>
</dbReference>
<dbReference type="GO" id="GO:0000028">
    <property type="term" value="P:ribosomal small subunit assembly"/>
    <property type="evidence" value="ECO:0007669"/>
    <property type="project" value="TreeGrafter"/>
</dbReference>
<dbReference type="GO" id="GO:0006412">
    <property type="term" value="P:translation"/>
    <property type="evidence" value="ECO:0007669"/>
    <property type="project" value="UniProtKB-UniRule"/>
</dbReference>
<dbReference type="FunFam" id="3.30.860.10:FF:000001">
    <property type="entry name" value="30S ribosomal protein S19"/>
    <property type="match status" value="1"/>
</dbReference>
<dbReference type="Gene3D" id="3.30.860.10">
    <property type="entry name" value="30s Ribosomal Protein S19, Chain A"/>
    <property type="match status" value="1"/>
</dbReference>
<dbReference type="HAMAP" id="MF_00531">
    <property type="entry name" value="Ribosomal_uS19"/>
    <property type="match status" value="1"/>
</dbReference>
<dbReference type="InterPro" id="IPR002222">
    <property type="entry name" value="Ribosomal_uS19"/>
</dbReference>
<dbReference type="InterPro" id="IPR005732">
    <property type="entry name" value="Ribosomal_uS19_bac-type"/>
</dbReference>
<dbReference type="InterPro" id="IPR020934">
    <property type="entry name" value="Ribosomal_uS19_CS"/>
</dbReference>
<dbReference type="InterPro" id="IPR023575">
    <property type="entry name" value="Ribosomal_uS19_SF"/>
</dbReference>
<dbReference type="NCBIfam" id="TIGR01050">
    <property type="entry name" value="rpsS_bact"/>
    <property type="match status" value="1"/>
</dbReference>
<dbReference type="PANTHER" id="PTHR11880">
    <property type="entry name" value="RIBOSOMAL PROTEIN S19P FAMILY MEMBER"/>
    <property type="match status" value="1"/>
</dbReference>
<dbReference type="PANTHER" id="PTHR11880:SF8">
    <property type="entry name" value="SMALL RIBOSOMAL SUBUNIT PROTEIN US19M"/>
    <property type="match status" value="1"/>
</dbReference>
<dbReference type="Pfam" id="PF00203">
    <property type="entry name" value="Ribosomal_S19"/>
    <property type="match status" value="1"/>
</dbReference>
<dbReference type="PIRSF" id="PIRSF002144">
    <property type="entry name" value="Ribosomal_S19"/>
    <property type="match status" value="1"/>
</dbReference>
<dbReference type="PRINTS" id="PR00975">
    <property type="entry name" value="RIBOSOMALS19"/>
</dbReference>
<dbReference type="SUPFAM" id="SSF54570">
    <property type="entry name" value="Ribosomal protein S19"/>
    <property type="match status" value="1"/>
</dbReference>
<dbReference type="PROSITE" id="PS00323">
    <property type="entry name" value="RIBOSOMAL_S19"/>
    <property type="match status" value="1"/>
</dbReference>
<name>RS19_ACIB5</name>
<reference key="1">
    <citation type="journal article" date="2008" name="J. Bacteriol.">
        <title>Comparative genome sequence analysis of multidrug-resistant Acinetobacter baumannii.</title>
        <authorList>
            <person name="Adams M.D."/>
            <person name="Goglin K."/>
            <person name="Molyneaux N."/>
            <person name="Hujer K.M."/>
            <person name="Lavender H."/>
            <person name="Jamison J.J."/>
            <person name="MacDonald I.J."/>
            <person name="Martin K.M."/>
            <person name="Russo T."/>
            <person name="Campagnari A.A."/>
            <person name="Hujer A.M."/>
            <person name="Bonomo R.A."/>
            <person name="Gill S.R."/>
        </authorList>
    </citation>
    <scope>NUCLEOTIDE SEQUENCE [LARGE SCALE GENOMIC DNA]</scope>
    <source>
        <strain>AB0057</strain>
    </source>
</reference>
<gene>
    <name evidence="1" type="primary">rpsS</name>
    <name type="ordered locus">AB57_3526</name>
</gene>
<sequence length="91" mass="10184">MPRSLKKGPFVDAHLFAKVEAAVASNSRKPIKTWSRRSMILPDFVGLTISVHNGRNHVPVIVTEHMVGHKLGEFAPTRTYRGHGVDKKSKR</sequence>
<proteinExistence type="evidence at protein level"/>
<accession>B7IA35</accession>
<protein>
    <recommendedName>
        <fullName evidence="1">Small ribosomal subunit protein uS19</fullName>
    </recommendedName>
    <alternativeName>
        <fullName evidence="2">30S ribosomal protein S19</fullName>
    </alternativeName>
</protein>